<organism>
    <name type="scientific">Oryza sativa subsp. japonica</name>
    <name type="common">Rice</name>
    <dbReference type="NCBI Taxonomy" id="39947"/>
    <lineage>
        <taxon>Eukaryota</taxon>
        <taxon>Viridiplantae</taxon>
        <taxon>Streptophyta</taxon>
        <taxon>Embryophyta</taxon>
        <taxon>Tracheophyta</taxon>
        <taxon>Spermatophyta</taxon>
        <taxon>Magnoliopsida</taxon>
        <taxon>Liliopsida</taxon>
        <taxon>Poales</taxon>
        <taxon>Poaceae</taxon>
        <taxon>BOP clade</taxon>
        <taxon>Oryzoideae</taxon>
        <taxon>Oryzeae</taxon>
        <taxon>Oryzinae</taxon>
        <taxon>Oryza</taxon>
        <taxon>Oryza sativa</taxon>
    </lineage>
</organism>
<sequence>MSRLSSIYSQHRTSGLRSDRSIMPNSTSNSLRTISSVHLPYNHRARNFHISHAVGDSSEHVIINGQASPSKVVQADAAALGTIAADMAPVVDGFSADDDELDLDSPTEGFSSIPEAIEDIRQGKYVIVVDDEDRENEGDLIMAASKVTPEAMAFIVRHGTGIVCVSMKEDDLERLELPLMVTTKENEEKLRTAFTVSVDAKEGTTTGVSAKDRANTVLALASPNSKPEDFNRPGHIFPLKYREGGVLKRAGHTEASVDLAMLAGLPPAAVLCEIVDDDDGSMALLPKLQDFARRENLKIISIADLIRYRRKRDRLVERVCVTPLQLQWGSFQSYCYRSLIDGMEHIAMVKGDVGDGQDILVRVHSECLTGDIFGSARCDCGNQLALAMTMIEKTGRGVVVYLRGHEGRGIGLGHKLRAYNLQDDGRDTVEANEDLGLPVDSREYGIGAQILRDLGVRTMRLMTNNPAKYTGLKGYGLSVLGRVPLLTPITNENRRYMETKRLKMGHVYGTRPSGNTSTLADGGIKKEQDQIDSASEQE</sequence>
<gene>
    <name type="primary">RIBA1</name>
    <name type="ordered locus">Os08g0481950</name>
    <name type="ordered locus">LOC_Os08g37605</name>
    <name type="ORF">OJ1111_H02.5</name>
    <name type="ORF">OsJ_27700</name>
    <name type="ORF">OSJNBb0092C08.34</name>
</gene>
<evidence type="ECO:0000250" key="1"/>
<evidence type="ECO:0000255" key="2"/>
<evidence type="ECO:0000256" key="3">
    <source>
        <dbReference type="SAM" id="MobiDB-lite"/>
    </source>
</evidence>
<evidence type="ECO:0000305" key="4"/>
<proteinExistence type="evidence at transcript level"/>
<feature type="transit peptide" description="Chloroplast" evidence="2">
    <location>
        <begin position="1"/>
        <end position="73"/>
    </location>
</feature>
<feature type="chain" id="PRO_0000422710" description="Probable bifunctional riboflavin biosynthesis protein RIBA 1, chloroplastic">
    <location>
        <begin position="74"/>
        <end position="538"/>
    </location>
</feature>
<feature type="region of interest" description="Disordered" evidence="3">
    <location>
        <begin position="1"/>
        <end position="29"/>
    </location>
</feature>
<feature type="region of interest" description="DHBP synthase" evidence="1">
    <location>
        <begin position="46"/>
        <end position="311"/>
    </location>
</feature>
<feature type="region of interest" description="GTP cyclohydrolase II" evidence="1">
    <location>
        <begin position="312"/>
        <end position="530"/>
    </location>
</feature>
<feature type="region of interest" description="Disordered" evidence="3">
    <location>
        <begin position="506"/>
        <end position="538"/>
    </location>
</feature>
<feature type="compositionally biased region" description="Polar residues" evidence="3">
    <location>
        <begin position="1"/>
        <end position="16"/>
    </location>
</feature>
<feature type="active site" description="Proton acceptor; for GTP cyclohydrolase activity" evidence="2">
    <location>
        <position position="440"/>
    </location>
</feature>
<feature type="active site" description="Nucleophile; for GTP cyclohydrolase activity" evidence="1">
    <location>
        <position position="442"/>
    </location>
</feature>
<feature type="binding site" evidence="1">
    <location>
        <begin position="134"/>
        <end position="135"/>
    </location>
    <ligand>
        <name>D-ribulose 5-phosphate</name>
        <dbReference type="ChEBI" id="CHEBI:58121"/>
    </ligand>
</feature>
<feature type="binding site" evidence="1">
    <location>
        <position position="135"/>
    </location>
    <ligand>
        <name>Mg(2+)</name>
        <dbReference type="ChEBI" id="CHEBI:18420"/>
        <label>1</label>
    </ligand>
</feature>
<feature type="binding site" evidence="1">
    <location>
        <position position="135"/>
    </location>
    <ligand>
        <name>Mg(2+)</name>
        <dbReference type="ChEBI" id="CHEBI:18420"/>
        <label>2</label>
    </ligand>
</feature>
<feature type="binding site" evidence="1">
    <location>
        <position position="139"/>
    </location>
    <ligand>
        <name>D-ribulose 5-phosphate</name>
        <dbReference type="ChEBI" id="CHEBI:58121"/>
    </ligand>
</feature>
<feature type="binding site" evidence="1">
    <location>
        <begin position="249"/>
        <end position="253"/>
    </location>
    <ligand>
        <name>D-ribulose 5-phosphate</name>
        <dbReference type="ChEBI" id="CHEBI:58121"/>
    </ligand>
</feature>
<feature type="binding site" evidence="1">
    <location>
        <position position="252"/>
    </location>
    <ligand>
        <name>Mg(2+)</name>
        <dbReference type="ChEBI" id="CHEBI:18420"/>
        <label>2</label>
    </ligand>
</feature>
<feature type="binding site" evidence="1">
    <location>
        <position position="273"/>
    </location>
    <ligand>
        <name>D-ribulose 5-phosphate</name>
        <dbReference type="ChEBI" id="CHEBI:58121"/>
    </ligand>
</feature>
<feature type="binding site" evidence="1">
    <location>
        <begin position="362"/>
        <end position="366"/>
    </location>
    <ligand>
        <name>GTP</name>
        <dbReference type="ChEBI" id="CHEBI:37565"/>
    </ligand>
</feature>
<feature type="binding site" evidence="1">
    <location>
        <position position="367"/>
    </location>
    <ligand>
        <name>Zn(2+)</name>
        <dbReference type="ChEBI" id="CHEBI:29105"/>
        <note>catalytic</note>
    </ligand>
</feature>
<feature type="binding site" evidence="1">
    <location>
        <position position="378"/>
    </location>
    <ligand>
        <name>Zn(2+)</name>
        <dbReference type="ChEBI" id="CHEBI:29105"/>
        <note>catalytic</note>
    </ligand>
</feature>
<feature type="binding site" evidence="1">
    <location>
        <position position="380"/>
    </location>
    <ligand>
        <name>Zn(2+)</name>
        <dbReference type="ChEBI" id="CHEBI:29105"/>
        <note>catalytic</note>
    </ligand>
</feature>
<feature type="binding site" evidence="1">
    <location>
        <position position="383"/>
    </location>
    <ligand>
        <name>GTP</name>
        <dbReference type="ChEBI" id="CHEBI:37565"/>
    </ligand>
</feature>
<feature type="binding site" evidence="1">
    <location>
        <begin position="406"/>
        <end position="408"/>
    </location>
    <ligand>
        <name>GTP</name>
        <dbReference type="ChEBI" id="CHEBI:37565"/>
    </ligand>
</feature>
<feature type="binding site" evidence="1">
    <location>
        <position position="428"/>
    </location>
    <ligand>
        <name>GTP</name>
        <dbReference type="ChEBI" id="CHEBI:37565"/>
    </ligand>
</feature>
<feature type="binding site" evidence="1">
    <location>
        <position position="463"/>
    </location>
    <ligand>
        <name>GTP</name>
        <dbReference type="ChEBI" id="CHEBI:37565"/>
    </ligand>
</feature>
<feature type="binding site" evidence="1">
    <location>
        <position position="468"/>
    </location>
    <ligand>
        <name>GTP</name>
        <dbReference type="ChEBI" id="CHEBI:37565"/>
    </ligand>
</feature>
<feature type="site" description="Essential for DHBP synthase activity" evidence="1">
    <location>
        <position position="235"/>
    </location>
</feature>
<feature type="site" description="Essential for DHBP synthase activity" evidence="1">
    <location>
        <position position="273"/>
    </location>
</feature>
<protein>
    <recommendedName>
        <fullName>Probable bifunctional riboflavin biosynthesis protein RIBA 1, chloroplastic</fullName>
        <shortName>OsRIBA1</shortName>
    </recommendedName>
    <domain>
        <recommendedName>
            <fullName>3,4-dihydroxy-2-butanone 4-phosphate synthase</fullName>
            <shortName>DHBP synthase</shortName>
            <ecNumber>4.1.99.12</ecNumber>
        </recommendedName>
    </domain>
    <domain>
        <recommendedName>
            <fullName>GTP cyclohydrolase-2</fullName>
            <ecNumber>3.5.4.25</ecNumber>
        </recommendedName>
        <alternativeName>
            <fullName>GTP cyclohydrolase II</fullName>
        </alternativeName>
    </domain>
</protein>
<dbReference type="EC" id="4.1.99.12"/>
<dbReference type="EC" id="3.5.4.25"/>
<dbReference type="EMBL" id="AP004213">
    <property type="protein sequence ID" value="BAD09287.1"/>
    <property type="molecule type" value="Genomic_DNA"/>
</dbReference>
<dbReference type="EMBL" id="AP005391">
    <property type="protein sequence ID" value="BAD10288.1"/>
    <property type="molecule type" value="Genomic_DNA"/>
</dbReference>
<dbReference type="EMBL" id="AP014964">
    <property type="status" value="NOT_ANNOTATED_CDS"/>
    <property type="molecule type" value="Genomic_DNA"/>
</dbReference>
<dbReference type="EMBL" id="CM000145">
    <property type="protein sequence ID" value="EEE68880.1"/>
    <property type="status" value="ALT_SEQ"/>
    <property type="molecule type" value="Genomic_DNA"/>
</dbReference>
<dbReference type="EMBL" id="AK241452">
    <property type="status" value="NOT_ANNOTATED_CDS"/>
    <property type="molecule type" value="mRNA"/>
</dbReference>
<dbReference type="SMR" id="Q6Z234"/>
<dbReference type="FunCoup" id="Q6Z234">
    <property type="interactions" value="141"/>
</dbReference>
<dbReference type="STRING" id="39947.Q6Z234"/>
<dbReference type="PaxDb" id="39947-Q6Z234"/>
<dbReference type="eggNOG" id="KOG1284">
    <property type="taxonomic scope" value="Eukaryota"/>
</dbReference>
<dbReference type="HOGENOM" id="CLU_020273_1_1_1"/>
<dbReference type="InParanoid" id="Q6Z234"/>
<dbReference type="UniPathway" id="UPA00275">
    <property type="reaction ID" value="UER00399"/>
</dbReference>
<dbReference type="UniPathway" id="UPA00275">
    <property type="reaction ID" value="UER00400"/>
</dbReference>
<dbReference type="Proteomes" id="UP000000763">
    <property type="component" value="Chromosome 8"/>
</dbReference>
<dbReference type="Proteomes" id="UP000007752">
    <property type="component" value="Chromosome 8"/>
</dbReference>
<dbReference type="Proteomes" id="UP000059680">
    <property type="component" value="Chromosome 8"/>
</dbReference>
<dbReference type="GO" id="GO:0009507">
    <property type="term" value="C:chloroplast"/>
    <property type="evidence" value="ECO:0000318"/>
    <property type="project" value="GO_Central"/>
</dbReference>
<dbReference type="GO" id="GO:0008686">
    <property type="term" value="F:3,4-dihydroxy-2-butanone-4-phosphate synthase activity"/>
    <property type="evidence" value="ECO:0000318"/>
    <property type="project" value="GO_Central"/>
</dbReference>
<dbReference type="GO" id="GO:0005525">
    <property type="term" value="F:GTP binding"/>
    <property type="evidence" value="ECO:0007669"/>
    <property type="project" value="UniProtKB-KW"/>
</dbReference>
<dbReference type="GO" id="GO:0003935">
    <property type="term" value="F:GTP cyclohydrolase II activity"/>
    <property type="evidence" value="ECO:0007669"/>
    <property type="project" value="UniProtKB-EC"/>
</dbReference>
<dbReference type="GO" id="GO:0046872">
    <property type="term" value="F:metal ion binding"/>
    <property type="evidence" value="ECO:0007669"/>
    <property type="project" value="UniProtKB-KW"/>
</dbReference>
<dbReference type="GO" id="GO:0009231">
    <property type="term" value="P:riboflavin biosynthetic process"/>
    <property type="evidence" value="ECO:0000318"/>
    <property type="project" value="GO_Central"/>
</dbReference>
<dbReference type="CDD" id="cd00641">
    <property type="entry name" value="GTP_cyclohydro2"/>
    <property type="match status" value="1"/>
</dbReference>
<dbReference type="FunFam" id="3.90.870.10:FF:000005">
    <property type="entry name" value="Bifunctional riboflavin biosynthesis protein RIBA 1 chloroplastic"/>
    <property type="match status" value="1"/>
</dbReference>
<dbReference type="FunFam" id="3.40.50.10990:FF:000001">
    <property type="entry name" value="Riboflavin biosynthesis protein RibBA"/>
    <property type="match status" value="1"/>
</dbReference>
<dbReference type="Gene3D" id="3.90.870.10">
    <property type="entry name" value="DHBP synthase"/>
    <property type="match status" value="1"/>
</dbReference>
<dbReference type="Gene3D" id="3.40.50.10990">
    <property type="entry name" value="GTP cyclohydrolase II"/>
    <property type="match status" value="1"/>
</dbReference>
<dbReference type="HAMAP" id="MF_00179">
    <property type="entry name" value="RibA"/>
    <property type="match status" value="1"/>
</dbReference>
<dbReference type="HAMAP" id="MF_00180">
    <property type="entry name" value="RibB"/>
    <property type="match status" value="1"/>
</dbReference>
<dbReference type="HAMAP" id="MF_01283">
    <property type="entry name" value="RibBA"/>
    <property type="match status" value="1"/>
</dbReference>
<dbReference type="InterPro" id="IPR017945">
    <property type="entry name" value="DHBP_synth_RibB-like_a/b_dom"/>
</dbReference>
<dbReference type="InterPro" id="IPR000422">
    <property type="entry name" value="DHBP_synthase_RibB"/>
</dbReference>
<dbReference type="InterPro" id="IPR032677">
    <property type="entry name" value="GTP_cyclohydro_II"/>
</dbReference>
<dbReference type="InterPro" id="IPR000926">
    <property type="entry name" value="RibA"/>
</dbReference>
<dbReference type="InterPro" id="IPR036144">
    <property type="entry name" value="RibA-like_sf"/>
</dbReference>
<dbReference type="InterPro" id="IPR016299">
    <property type="entry name" value="Riboflavin_synth_RibBA"/>
</dbReference>
<dbReference type="NCBIfam" id="NF001591">
    <property type="entry name" value="PRK00393.1"/>
    <property type="match status" value="1"/>
</dbReference>
<dbReference type="NCBIfam" id="NF006803">
    <property type="entry name" value="PRK09311.1"/>
    <property type="match status" value="1"/>
</dbReference>
<dbReference type="NCBIfam" id="TIGR00505">
    <property type="entry name" value="ribA"/>
    <property type="match status" value="1"/>
</dbReference>
<dbReference type="NCBIfam" id="TIGR00506">
    <property type="entry name" value="ribB"/>
    <property type="match status" value="1"/>
</dbReference>
<dbReference type="PANTHER" id="PTHR21327:SF39">
    <property type="entry name" value="BIFUNCTIONAL RIBOFLAVIN BIOSYNTHESIS PROTEIN RIBA 1, CHLOROPLASTIC-RELATED"/>
    <property type="match status" value="1"/>
</dbReference>
<dbReference type="PANTHER" id="PTHR21327">
    <property type="entry name" value="GTP CYCLOHYDROLASE II-RELATED"/>
    <property type="match status" value="1"/>
</dbReference>
<dbReference type="Pfam" id="PF00926">
    <property type="entry name" value="DHBP_synthase"/>
    <property type="match status" value="1"/>
</dbReference>
<dbReference type="Pfam" id="PF00925">
    <property type="entry name" value="GTP_cyclohydro2"/>
    <property type="match status" value="1"/>
</dbReference>
<dbReference type="SUPFAM" id="SSF142695">
    <property type="entry name" value="RibA-like"/>
    <property type="match status" value="1"/>
</dbReference>
<dbReference type="SUPFAM" id="SSF55821">
    <property type="entry name" value="YrdC/RibB"/>
    <property type="match status" value="1"/>
</dbReference>
<reference key="1">
    <citation type="journal article" date="2005" name="Nature">
        <title>The map-based sequence of the rice genome.</title>
        <authorList>
            <consortium name="International rice genome sequencing project (IRGSP)"/>
        </authorList>
    </citation>
    <scope>NUCLEOTIDE SEQUENCE [LARGE SCALE GENOMIC DNA]</scope>
    <source>
        <strain>cv. Nipponbare</strain>
    </source>
</reference>
<reference key="2">
    <citation type="journal article" date="2013" name="Rice">
        <title>Improvement of the Oryza sativa Nipponbare reference genome using next generation sequence and optical map data.</title>
        <authorList>
            <person name="Kawahara Y."/>
            <person name="de la Bastide M."/>
            <person name="Hamilton J.P."/>
            <person name="Kanamori H."/>
            <person name="McCombie W.R."/>
            <person name="Ouyang S."/>
            <person name="Schwartz D.C."/>
            <person name="Tanaka T."/>
            <person name="Wu J."/>
            <person name="Zhou S."/>
            <person name="Childs K.L."/>
            <person name="Davidson R.M."/>
            <person name="Lin H."/>
            <person name="Quesada-Ocampo L."/>
            <person name="Vaillancourt B."/>
            <person name="Sakai H."/>
            <person name="Lee S.S."/>
            <person name="Kim J."/>
            <person name="Numa H."/>
            <person name="Itoh T."/>
            <person name="Buell C.R."/>
            <person name="Matsumoto T."/>
        </authorList>
    </citation>
    <scope>GENOME REANNOTATION</scope>
    <source>
        <strain>cv. Nipponbare</strain>
    </source>
</reference>
<reference key="3">
    <citation type="journal article" date="2005" name="PLoS Biol.">
        <title>The genomes of Oryza sativa: a history of duplications.</title>
        <authorList>
            <person name="Yu J."/>
            <person name="Wang J."/>
            <person name="Lin W."/>
            <person name="Li S."/>
            <person name="Li H."/>
            <person name="Zhou J."/>
            <person name="Ni P."/>
            <person name="Dong W."/>
            <person name="Hu S."/>
            <person name="Zeng C."/>
            <person name="Zhang J."/>
            <person name="Zhang Y."/>
            <person name="Li R."/>
            <person name="Xu Z."/>
            <person name="Li S."/>
            <person name="Li X."/>
            <person name="Zheng H."/>
            <person name="Cong L."/>
            <person name="Lin L."/>
            <person name="Yin J."/>
            <person name="Geng J."/>
            <person name="Li G."/>
            <person name="Shi J."/>
            <person name="Liu J."/>
            <person name="Lv H."/>
            <person name="Li J."/>
            <person name="Wang J."/>
            <person name="Deng Y."/>
            <person name="Ran L."/>
            <person name="Shi X."/>
            <person name="Wang X."/>
            <person name="Wu Q."/>
            <person name="Li C."/>
            <person name="Ren X."/>
            <person name="Wang J."/>
            <person name="Wang X."/>
            <person name="Li D."/>
            <person name="Liu D."/>
            <person name="Zhang X."/>
            <person name="Ji Z."/>
            <person name="Zhao W."/>
            <person name="Sun Y."/>
            <person name="Zhang Z."/>
            <person name="Bao J."/>
            <person name="Han Y."/>
            <person name="Dong L."/>
            <person name="Ji J."/>
            <person name="Chen P."/>
            <person name="Wu S."/>
            <person name="Liu J."/>
            <person name="Xiao Y."/>
            <person name="Bu D."/>
            <person name="Tan J."/>
            <person name="Yang L."/>
            <person name="Ye C."/>
            <person name="Zhang J."/>
            <person name="Xu J."/>
            <person name="Zhou Y."/>
            <person name="Yu Y."/>
            <person name="Zhang B."/>
            <person name="Zhuang S."/>
            <person name="Wei H."/>
            <person name="Liu B."/>
            <person name="Lei M."/>
            <person name="Yu H."/>
            <person name="Li Y."/>
            <person name="Xu H."/>
            <person name="Wei S."/>
            <person name="He X."/>
            <person name="Fang L."/>
            <person name="Zhang Z."/>
            <person name="Zhang Y."/>
            <person name="Huang X."/>
            <person name="Su Z."/>
            <person name="Tong W."/>
            <person name="Li J."/>
            <person name="Tong Z."/>
            <person name="Li S."/>
            <person name="Ye J."/>
            <person name="Wang L."/>
            <person name="Fang L."/>
            <person name="Lei T."/>
            <person name="Chen C.-S."/>
            <person name="Chen H.-C."/>
            <person name="Xu Z."/>
            <person name="Li H."/>
            <person name="Huang H."/>
            <person name="Zhang F."/>
            <person name="Xu H."/>
            <person name="Li N."/>
            <person name="Zhao C."/>
            <person name="Li S."/>
            <person name="Dong L."/>
            <person name="Huang Y."/>
            <person name="Li L."/>
            <person name="Xi Y."/>
            <person name="Qi Q."/>
            <person name="Li W."/>
            <person name="Zhang B."/>
            <person name="Hu W."/>
            <person name="Zhang Y."/>
            <person name="Tian X."/>
            <person name="Jiao Y."/>
            <person name="Liang X."/>
            <person name="Jin J."/>
            <person name="Gao L."/>
            <person name="Zheng W."/>
            <person name="Hao B."/>
            <person name="Liu S.-M."/>
            <person name="Wang W."/>
            <person name="Yuan L."/>
            <person name="Cao M."/>
            <person name="McDermott J."/>
            <person name="Samudrala R."/>
            <person name="Wang J."/>
            <person name="Wong G.K.-S."/>
            <person name="Yang H."/>
        </authorList>
    </citation>
    <scope>NUCLEOTIDE SEQUENCE [LARGE SCALE GENOMIC DNA]</scope>
    <source>
        <strain>cv. Nipponbare</strain>
    </source>
</reference>
<reference key="4">
    <citation type="submission" date="2006-10" db="EMBL/GenBank/DDBJ databases">
        <title>Oryza sativa full length cDNA.</title>
        <authorList>
            <consortium name="The rice full-length cDNA consortium"/>
        </authorList>
    </citation>
    <scope>NUCLEOTIDE SEQUENCE [LARGE SCALE MRNA]</scope>
    <source>
        <strain>cv. Nipponbare</strain>
    </source>
</reference>
<accession>Q6Z234</accession>
<accession>B9G1G3</accession>
<keyword id="KW-0150">Chloroplast</keyword>
<keyword id="KW-0342">GTP-binding</keyword>
<keyword id="KW-0378">Hydrolase</keyword>
<keyword id="KW-0456">Lyase</keyword>
<keyword id="KW-0460">Magnesium</keyword>
<keyword id="KW-0464">Manganese</keyword>
<keyword id="KW-0479">Metal-binding</keyword>
<keyword id="KW-0511">Multifunctional enzyme</keyword>
<keyword id="KW-0547">Nucleotide-binding</keyword>
<keyword id="KW-0934">Plastid</keyword>
<keyword id="KW-1185">Reference proteome</keyword>
<keyword id="KW-0686">Riboflavin biosynthesis</keyword>
<keyword id="KW-0809">Transit peptide</keyword>
<keyword id="KW-0862">Zinc</keyword>
<comment type="function">
    <text evidence="1">Involved in riboflavin biosynthesis. Catalyzes both the conversion of D-ribulose 5-phosphate to formate and 3,4-dihydroxy-2-butanone 4-phosphate and the conversion of GTP to 2,5-diamino-6-ribosylamino-4(3H)-pyrimidinone 5'-phosphate (DARP), formate and pyrophosphate (By similarity).</text>
</comment>
<comment type="catalytic activity">
    <reaction>
        <text>D-ribulose 5-phosphate = (2S)-2-hydroxy-3-oxobutyl phosphate + formate + H(+)</text>
        <dbReference type="Rhea" id="RHEA:18457"/>
        <dbReference type="ChEBI" id="CHEBI:15378"/>
        <dbReference type="ChEBI" id="CHEBI:15740"/>
        <dbReference type="ChEBI" id="CHEBI:58121"/>
        <dbReference type="ChEBI" id="CHEBI:58830"/>
        <dbReference type="EC" id="4.1.99.12"/>
    </reaction>
</comment>
<comment type="catalytic activity">
    <reaction>
        <text>GTP + 4 H2O = 2,5-diamino-6-hydroxy-4-(5-phosphoribosylamino)-pyrimidine + formate + 2 phosphate + 3 H(+)</text>
        <dbReference type="Rhea" id="RHEA:23704"/>
        <dbReference type="ChEBI" id="CHEBI:15377"/>
        <dbReference type="ChEBI" id="CHEBI:15378"/>
        <dbReference type="ChEBI" id="CHEBI:15740"/>
        <dbReference type="ChEBI" id="CHEBI:37565"/>
        <dbReference type="ChEBI" id="CHEBI:43474"/>
        <dbReference type="ChEBI" id="CHEBI:58614"/>
        <dbReference type="EC" id="3.5.4.25"/>
    </reaction>
</comment>
<comment type="cofactor">
    <cofactor evidence="1">
        <name>Mg(2+)</name>
        <dbReference type="ChEBI" id="CHEBI:18420"/>
    </cofactor>
    <cofactor evidence="1">
        <name>Mn(2+)</name>
        <dbReference type="ChEBI" id="CHEBI:29035"/>
    </cofactor>
    <text evidence="1">Binds 2 divalent metal cations per subunit. Magnesium or manganese.</text>
</comment>
<comment type="cofactor">
    <cofactor evidence="1">
        <name>Zn(2+)</name>
        <dbReference type="ChEBI" id="CHEBI:29105"/>
    </cofactor>
    <text evidence="1">Binds 1 zinc ion per subunit.</text>
</comment>
<comment type="pathway">
    <text>Cofactor biosynthesis; riboflavin biosynthesis; 2-hydroxy-3-oxobutyl phosphate from D-ribulose 5-phosphate: step 1/1.</text>
</comment>
<comment type="pathway">
    <text>Cofactor biosynthesis; riboflavin biosynthesis; 5-amino-6-(D-ribitylamino)uracil from GTP: step 1/4.</text>
</comment>
<comment type="subcellular location">
    <subcellularLocation>
        <location evidence="4">Plastid</location>
        <location evidence="4">Chloroplast</location>
    </subcellularLocation>
</comment>
<comment type="similarity">
    <text evidence="4">In the N-terminal section; belongs to the DHBP synthase family.</text>
</comment>
<comment type="similarity">
    <text evidence="4">In the C-terminal section; belongs to the GTP cyclohydrolase II family.</text>
</comment>
<comment type="sequence caution" evidence="4">
    <conflict type="erroneous gene model prediction">
        <sequence resource="EMBL-CDS" id="EEE68880"/>
    </conflict>
</comment>
<name>RIBA1_ORYSJ</name>